<organism>
    <name type="scientific">Ruthia magnifica subsp. Calyptogena magnifica</name>
    <dbReference type="NCBI Taxonomy" id="413404"/>
    <lineage>
        <taxon>Bacteria</taxon>
        <taxon>Pseudomonadati</taxon>
        <taxon>Pseudomonadota</taxon>
        <taxon>Gammaproteobacteria</taxon>
        <taxon>Candidatus Pseudothioglobaceae</taxon>
        <taxon>Candidatus Ruthturnera</taxon>
    </lineage>
</organism>
<protein>
    <recommendedName>
        <fullName evidence="1">6,7-dimethyl-8-ribityllumazine synthase</fullName>
        <shortName evidence="1">DMRL synthase</shortName>
        <shortName evidence="1">LS</shortName>
        <shortName evidence="1">Lumazine synthase</shortName>
        <ecNumber evidence="1">2.5.1.78</ecNumber>
    </recommendedName>
</protein>
<proteinExistence type="inferred from homology"/>
<reference key="1">
    <citation type="journal article" date="2007" name="Science">
        <title>The Calyptogena magnifica chemoautotrophic symbiont genome.</title>
        <authorList>
            <person name="Newton I.L.G."/>
            <person name="Woyke T."/>
            <person name="Auchtung T.A."/>
            <person name="Dilly G.F."/>
            <person name="Dutton R.J."/>
            <person name="Fisher M.C."/>
            <person name="Fontanez K.M."/>
            <person name="Lau E."/>
            <person name="Stewart F.J."/>
            <person name="Richardson P.M."/>
            <person name="Barry K.W."/>
            <person name="Saunders E."/>
            <person name="Detter J.C."/>
            <person name="Wu D."/>
            <person name="Eisen J.A."/>
            <person name="Cavanaugh C.M."/>
        </authorList>
    </citation>
    <scope>NUCLEOTIDE SEQUENCE [LARGE SCALE GENOMIC DNA]</scope>
</reference>
<comment type="function">
    <text evidence="1">Catalyzes the formation of 6,7-dimethyl-8-ribityllumazine by condensation of 5-amino-6-(D-ribitylamino)uracil with 3,4-dihydroxy-2-butanone 4-phosphate. This is the penultimate step in the biosynthesis of riboflavin.</text>
</comment>
<comment type="catalytic activity">
    <reaction evidence="1">
        <text>(2S)-2-hydroxy-3-oxobutyl phosphate + 5-amino-6-(D-ribitylamino)uracil = 6,7-dimethyl-8-(1-D-ribityl)lumazine + phosphate + 2 H2O + H(+)</text>
        <dbReference type="Rhea" id="RHEA:26152"/>
        <dbReference type="ChEBI" id="CHEBI:15377"/>
        <dbReference type="ChEBI" id="CHEBI:15378"/>
        <dbReference type="ChEBI" id="CHEBI:15934"/>
        <dbReference type="ChEBI" id="CHEBI:43474"/>
        <dbReference type="ChEBI" id="CHEBI:58201"/>
        <dbReference type="ChEBI" id="CHEBI:58830"/>
        <dbReference type="EC" id="2.5.1.78"/>
    </reaction>
</comment>
<comment type="pathway">
    <text evidence="1">Cofactor biosynthesis; riboflavin biosynthesis; riboflavin from 2-hydroxy-3-oxobutyl phosphate and 5-amino-6-(D-ribitylamino)uracil: step 1/2.</text>
</comment>
<comment type="subunit">
    <text evidence="1">Forms an icosahedral capsid composed of 60 subunits, arranged as a dodecamer of pentamers.</text>
</comment>
<comment type="similarity">
    <text evidence="1">Belongs to the DMRL synthase family.</text>
</comment>
<keyword id="KW-0686">Riboflavin biosynthesis</keyword>
<keyword id="KW-0808">Transferase</keyword>
<feature type="chain" id="PRO_1000203799" description="6,7-dimethyl-8-ribityllumazine synthase">
    <location>
        <begin position="1"/>
        <end position="167"/>
    </location>
</feature>
<feature type="active site" description="Proton donor" evidence="1">
    <location>
        <position position="97"/>
    </location>
</feature>
<feature type="binding site" evidence="1">
    <location>
        <position position="26"/>
    </location>
    <ligand>
        <name>5-amino-6-(D-ribitylamino)uracil</name>
        <dbReference type="ChEBI" id="CHEBI:15934"/>
    </ligand>
</feature>
<feature type="binding site" evidence="1">
    <location>
        <begin position="60"/>
        <end position="62"/>
    </location>
    <ligand>
        <name>5-amino-6-(D-ribitylamino)uracil</name>
        <dbReference type="ChEBI" id="CHEBI:15934"/>
    </ligand>
</feature>
<feature type="binding site" evidence="1">
    <location>
        <begin position="89"/>
        <end position="91"/>
    </location>
    <ligand>
        <name>5-amino-6-(D-ribitylamino)uracil</name>
        <dbReference type="ChEBI" id="CHEBI:15934"/>
    </ligand>
</feature>
<feature type="binding site" evidence="1">
    <location>
        <begin position="94"/>
        <end position="95"/>
    </location>
    <ligand>
        <name>(2S)-2-hydroxy-3-oxobutyl phosphate</name>
        <dbReference type="ChEBI" id="CHEBI:58830"/>
    </ligand>
</feature>
<feature type="binding site" evidence="1">
    <location>
        <position position="122"/>
    </location>
    <ligand>
        <name>5-amino-6-(D-ribitylamino)uracil</name>
        <dbReference type="ChEBI" id="CHEBI:15934"/>
    </ligand>
</feature>
<feature type="binding site" evidence="1">
    <location>
        <position position="136"/>
    </location>
    <ligand>
        <name>(2S)-2-hydroxy-3-oxobutyl phosphate</name>
        <dbReference type="ChEBI" id="CHEBI:58830"/>
    </ligand>
</feature>
<name>RISB_RUTMC</name>
<accession>A1AWF3</accession>
<dbReference type="EC" id="2.5.1.78" evidence="1"/>
<dbReference type="EMBL" id="CP000488">
    <property type="protein sequence ID" value="ABL02260.1"/>
    <property type="molecule type" value="Genomic_DNA"/>
</dbReference>
<dbReference type="RefSeq" id="WP_011737885.1">
    <property type="nucleotide sequence ID" value="NC_008610.1"/>
</dbReference>
<dbReference type="SMR" id="A1AWF3"/>
<dbReference type="STRING" id="413404.Rmag_0506"/>
<dbReference type="KEGG" id="rma:Rmag_0506"/>
<dbReference type="eggNOG" id="COG0054">
    <property type="taxonomic scope" value="Bacteria"/>
</dbReference>
<dbReference type="HOGENOM" id="CLU_089358_1_1_6"/>
<dbReference type="OrthoDB" id="9809709at2"/>
<dbReference type="UniPathway" id="UPA00275">
    <property type="reaction ID" value="UER00404"/>
</dbReference>
<dbReference type="Proteomes" id="UP000002587">
    <property type="component" value="Chromosome"/>
</dbReference>
<dbReference type="GO" id="GO:0005829">
    <property type="term" value="C:cytosol"/>
    <property type="evidence" value="ECO:0007669"/>
    <property type="project" value="TreeGrafter"/>
</dbReference>
<dbReference type="GO" id="GO:0009349">
    <property type="term" value="C:riboflavin synthase complex"/>
    <property type="evidence" value="ECO:0007669"/>
    <property type="project" value="InterPro"/>
</dbReference>
<dbReference type="GO" id="GO:0000906">
    <property type="term" value="F:6,7-dimethyl-8-ribityllumazine synthase activity"/>
    <property type="evidence" value="ECO:0007669"/>
    <property type="project" value="UniProtKB-UniRule"/>
</dbReference>
<dbReference type="GO" id="GO:0009231">
    <property type="term" value="P:riboflavin biosynthetic process"/>
    <property type="evidence" value="ECO:0007669"/>
    <property type="project" value="UniProtKB-UniRule"/>
</dbReference>
<dbReference type="CDD" id="cd09209">
    <property type="entry name" value="Lumazine_synthase-I"/>
    <property type="match status" value="1"/>
</dbReference>
<dbReference type="Gene3D" id="3.40.50.960">
    <property type="entry name" value="Lumazine/riboflavin synthase"/>
    <property type="match status" value="1"/>
</dbReference>
<dbReference type="HAMAP" id="MF_00178">
    <property type="entry name" value="Lumazine_synth"/>
    <property type="match status" value="1"/>
</dbReference>
<dbReference type="InterPro" id="IPR034964">
    <property type="entry name" value="LS"/>
</dbReference>
<dbReference type="InterPro" id="IPR002180">
    <property type="entry name" value="LS/RS"/>
</dbReference>
<dbReference type="InterPro" id="IPR036467">
    <property type="entry name" value="LS/RS_sf"/>
</dbReference>
<dbReference type="NCBIfam" id="TIGR00114">
    <property type="entry name" value="lumazine-synth"/>
    <property type="match status" value="1"/>
</dbReference>
<dbReference type="PANTHER" id="PTHR21058:SF0">
    <property type="entry name" value="6,7-DIMETHYL-8-RIBITYLLUMAZINE SYNTHASE"/>
    <property type="match status" value="1"/>
</dbReference>
<dbReference type="PANTHER" id="PTHR21058">
    <property type="entry name" value="6,7-DIMETHYL-8-RIBITYLLUMAZINE SYNTHASE DMRL SYNTHASE LUMAZINE SYNTHASE"/>
    <property type="match status" value="1"/>
</dbReference>
<dbReference type="Pfam" id="PF00885">
    <property type="entry name" value="DMRL_synthase"/>
    <property type="match status" value="1"/>
</dbReference>
<dbReference type="SUPFAM" id="SSF52121">
    <property type="entry name" value="Lumazine synthase"/>
    <property type="match status" value="1"/>
</dbReference>
<sequence>MKFKFNKNGNNNFLAKAKVAIIVGYFYQDIGDKLLSAAQETLAKYGINANNINVFYVPGAFEIPLLAKKLASQKLSNKNLYDGIVALGAIINGETPHFEFVCNECARGVSDVSYQYEIPTAFGILTTNNMEQTIGRAGGYKGNKGEKATMAMIEMLYLMQQVDTQTF</sequence>
<gene>
    <name evidence="1" type="primary">ribH</name>
    <name type="ordered locus">Rmag_0506</name>
</gene>
<evidence type="ECO:0000255" key="1">
    <source>
        <dbReference type="HAMAP-Rule" id="MF_00178"/>
    </source>
</evidence>